<proteinExistence type="inferred from homology"/>
<keyword id="KW-0067">ATP-binding</keyword>
<keyword id="KW-0227">DNA damage</keyword>
<keyword id="KW-0234">DNA repair</keyword>
<keyword id="KW-0238">DNA-binding</keyword>
<keyword id="KW-0547">Nucleotide-binding</keyword>
<keyword id="KW-1185">Reference proteome</keyword>
<reference key="1">
    <citation type="journal article" date="2007" name="Genome Res.">
        <title>Genome sequence of a proteolytic (Group I) Clostridium botulinum strain Hall A and comparative analysis of the clostridial genomes.</title>
        <authorList>
            <person name="Sebaihia M."/>
            <person name="Peck M.W."/>
            <person name="Minton N.P."/>
            <person name="Thomson N.R."/>
            <person name="Holden M.T.G."/>
            <person name="Mitchell W.J."/>
            <person name="Carter A.T."/>
            <person name="Bentley S.D."/>
            <person name="Mason D.R."/>
            <person name="Crossman L."/>
            <person name="Paul C.J."/>
            <person name="Ivens A."/>
            <person name="Wells-Bennik M.H.J."/>
            <person name="Davis I.J."/>
            <person name="Cerdeno-Tarraga A.M."/>
            <person name="Churcher C."/>
            <person name="Quail M.A."/>
            <person name="Chillingworth T."/>
            <person name="Feltwell T."/>
            <person name="Fraser A."/>
            <person name="Goodhead I."/>
            <person name="Hance Z."/>
            <person name="Jagels K."/>
            <person name="Larke N."/>
            <person name="Maddison M."/>
            <person name="Moule S."/>
            <person name="Mungall K."/>
            <person name="Norbertczak H."/>
            <person name="Rabbinowitsch E."/>
            <person name="Sanders M."/>
            <person name="Simmonds M."/>
            <person name="White B."/>
            <person name="Whithead S."/>
            <person name="Parkhill J."/>
        </authorList>
    </citation>
    <scope>NUCLEOTIDE SEQUENCE [LARGE SCALE GENOMIC DNA]</scope>
    <source>
        <strain>Hall / ATCC 3502 / NCTC 13319 / Type A</strain>
    </source>
</reference>
<reference key="2">
    <citation type="journal article" date="2007" name="PLoS ONE">
        <title>Analysis of the neurotoxin complex genes in Clostridium botulinum A1-A4 and B1 strains: BoNT/A3, /Ba4 and /B1 clusters are located within plasmids.</title>
        <authorList>
            <person name="Smith T.J."/>
            <person name="Hill K.K."/>
            <person name="Foley B.T."/>
            <person name="Detter J.C."/>
            <person name="Munk A.C."/>
            <person name="Bruce D.C."/>
            <person name="Doggett N.A."/>
            <person name="Smith L.A."/>
            <person name="Marks J.D."/>
            <person name="Xie G."/>
            <person name="Brettin T.S."/>
        </authorList>
    </citation>
    <scope>NUCLEOTIDE SEQUENCE [LARGE SCALE GENOMIC DNA]</scope>
    <source>
        <strain>Hall / ATCC 3502 / NCTC 13319 / Type A</strain>
    </source>
</reference>
<comment type="function">
    <text evidence="1">This protein is involved in the repair of mismatches in DNA. It is possible that it carries out the mismatch recognition step. This protein has a weak ATPase activity.</text>
</comment>
<comment type="similarity">
    <text evidence="1">Belongs to the DNA mismatch repair MutS family.</text>
</comment>
<comment type="sequence caution" evidence="2">
    <conflict type="erroneous termination">
        <sequence resource="EMBL" id="CP000727"/>
    </conflict>
    <text>Truncated C-terminus.</text>
</comment>
<sequence>MGLTPMMRQYLEVKESCKDCILFFRLGDFYEMFFEDAKVASKELELVLTGRDCGLEERAPMCGIPYHAANTYIGRLVSAGYKIAICEQLEDPSASKGIVKRGIIKIITPGTYTDSSFLEENKNNYIMSFYLDDNMCAMSFADISTGEFNSTHSNFKEAVVLDEISKFAPREIVLEENIKESFIHTIKERFPNISISKIKQENFDYNIDNNLKEQFNNFNENEYETIVKKSANGLLYYIFHTQKNILSNINKIDYYSIVDYLTIDVNSRRNLEITENLREKTKKGSLLWALDKTNTAMGGRQLRRWIEQPLINKNPIENRLNAVEELLNNISLQEDLKEDLKSIYDIERIVGKVASKSVNAKELISLKCSIGKVPYIKEYLSNFKSDLFLNMEQCIDTLEDIHKLLDKALLDNPSLSVKEGNIIKEGFNEEVDSLREAKSNGKKWIASLEQKEKEETGIKSLKVSYNKVFGYFIEITKANLNLVPEGRYIRKQTLSNAERYITPELKEMEEKILGAEEKLIDIEYKLFTEIRDFIEENIDRMQKTARIISDIDCLCSLATVALENNYIKPNINAKDEILIEEGRHPVVEKVIPKGEFISNDSLIDTKENQLILITGPNMAGKSTYMRQVALITIMAQIGSFVPAKKANISICDKIFTRIGASDDLAAGKSTFMVEMWEVSNILKNATSKSLVLLDEVGRGTSTYDGLSIAWSVIEYICNNKNLRCKTLFATHYHELTKLEDNIEGVKNYSVSVSELENEIVFLRKIIKGGADQSYGIEVAKLAGLPSPVINRAKEILQHIEGDKEENSLNIAPSKEYKSKDYIEVSKDTSNTKNNLGSEIKHDTLSETNTDTIIEDESTKEHLSSNKKQINCRINDEKSIKKEVAVDSFQINFEYIKRDKIIEEIKNIDILNMTPMEGFNKLYDIINKTKDID</sequence>
<organism>
    <name type="scientific">Clostridium botulinum (strain Hall / ATCC 3502 / NCTC 13319 / Type A)</name>
    <dbReference type="NCBI Taxonomy" id="441771"/>
    <lineage>
        <taxon>Bacteria</taxon>
        <taxon>Bacillati</taxon>
        <taxon>Bacillota</taxon>
        <taxon>Clostridia</taxon>
        <taxon>Eubacteriales</taxon>
        <taxon>Clostridiaceae</taxon>
        <taxon>Clostridium</taxon>
    </lineage>
</organism>
<gene>
    <name evidence="1" type="primary">mutS</name>
    <name type="ordered locus">CBO1800</name>
    <name type="ordered locus">CLC_1742</name>
</gene>
<feature type="chain" id="PRO_1000093620" description="DNA mismatch repair protein MutS">
    <location>
        <begin position="1"/>
        <end position="932"/>
    </location>
</feature>
<feature type="binding site" evidence="1">
    <location>
        <begin position="615"/>
        <end position="622"/>
    </location>
    <ligand>
        <name>ATP</name>
        <dbReference type="ChEBI" id="CHEBI:30616"/>
    </ligand>
</feature>
<accession>A5I2S2</accession>
<evidence type="ECO:0000255" key="1">
    <source>
        <dbReference type="HAMAP-Rule" id="MF_00096"/>
    </source>
</evidence>
<evidence type="ECO:0000305" key="2"/>
<dbReference type="EMBL" id="AM412317">
    <property type="protein sequence ID" value="CAL83339.1"/>
    <property type="molecule type" value="Genomic_DNA"/>
</dbReference>
<dbReference type="EMBL" id="CP000727">
    <property type="status" value="NOT_ANNOTATED_CDS"/>
    <property type="molecule type" value="Genomic_DNA"/>
</dbReference>
<dbReference type="RefSeq" id="YP_001254300.1">
    <property type="nucleotide sequence ID" value="NC_009495.1"/>
</dbReference>
<dbReference type="SMR" id="A5I2S2"/>
<dbReference type="GeneID" id="5186055"/>
<dbReference type="KEGG" id="cbo:CBO1800"/>
<dbReference type="PATRIC" id="fig|413999.7.peg.1771"/>
<dbReference type="HOGENOM" id="CLU_002472_3_0_9"/>
<dbReference type="Proteomes" id="UP000001986">
    <property type="component" value="Chromosome"/>
</dbReference>
<dbReference type="GO" id="GO:0005829">
    <property type="term" value="C:cytosol"/>
    <property type="evidence" value="ECO:0000318"/>
    <property type="project" value="GO_Central"/>
</dbReference>
<dbReference type="GO" id="GO:0005524">
    <property type="term" value="F:ATP binding"/>
    <property type="evidence" value="ECO:0007669"/>
    <property type="project" value="UniProtKB-UniRule"/>
</dbReference>
<dbReference type="GO" id="GO:0140664">
    <property type="term" value="F:ATP-dependent DNA damage sensor activity"/>
    <property type="evidence" value="ECO:0007669"/>
    <property type="project" value="InterPro"/>
</dbReference>
<dbReference type="GO" id="GO:0003684">
    <property type="term" value="F:damaged DNA binding"/>
    <property type="evidence" value="ECO:0007669"/>
    <property type="project" value="UniProtKB-UniRule"/>
</dbReference>
<dbReference type="GO" id="GO:0030983">
    <property type="term" value="F:mismatched DNA binding"/>
    <property type="evidence" value="ECO:0000318"/>
    <property type="project" value="GO_Central"/>
</dbReference>
<dbReference type="GO" id="GO:0006298">
    <property type="term" value="P:mismatch repair"/>
    <property type="evidence" value="ECO:0000318"/>
    <property type="project" value="GO_Central"/>
</dbReference>
<dbReference type="CDD" id="cd03284">
    <property type="entry name" value="ABC_MutS1"/>
    <property type="match status" value="1"/>
</dbReference>
<dbReference type="FunFam" id="1.10.1420.10:FF:000007">
    <property type="entry name" value="DNA mismatch repair protein MutS"/>
    <property type="match status" value="1"/>
</dbReference>
<dbReference type="FunFam" id="3.40.1170.10:FF:000001">
    <property type="entry name" value="DNA mismatch repair protein MutS"/>
    <property type="match status" value="1"/>
</dbReference>
<dbReference type="FunFam" id="3.40.50.300:FF:001579">
    <property type="entry name" value="DNA mismatch repair protein MutS"/>
    <property type="match status" value="1"/>
</dbReference>
<dbReference type="Gene3D" id="1.10.1420.10">
    <property type="match status" value="2"/>
</dbReference>
<dbReference type="Gene3D" id="3.40.1170.10">
    <property type="entry name" value="DNA repair protein MutS, domain I"/>
    <property type="match status" value="1"/>
</dbReference>
<dbReference type="Gene3D" id="3.30.420.110">
    <property type="entry name" value="MutS, connector domain"/>
    <property type="match status" value="1"/>
</dbReference>
<dbReference type="Gene3D" id="3.40.50.300">
    <property type="entry name" value="P-loop containing nucleotide triphosphate hydrolases"/>
    <property type="match status" value="1"/>
</dbReference>
<dbReference type="HAMAP" id="MF_00096">
    <property type="entry name" value="MutS"/>
    <property type="match status" value="1"/>
</dbReference>
<dbReference type="InterPro" id="IPR005748">
    <property type="entry name" value="DNA_mismatch_repair_MutS"/>
</dbReference>
<dbReference type="InterPro" id="IPR007695">
    <property type="entry name" value="DNA_mismatch_repair_MutS-lik_N"/>
</dbReference>
<dbReference type="InterPro" id="IPR017261">
    <property type="entry name" value="DNA_mismatch_repair_MutS/MSH"/>
</dbReference>
<dbReference type="InterPro" id="IPR000432">
    <property type="entry name" value="DNA_mismatch_repair_MutS_C"/>
</dbReference>
<dbReference type="InterPro" id="IPR007861">
    <property type="entry name" value="DNA_mismatch_repair_MutS_clamp"/>
</dbReference>
<dbReference type="InterPro" id="IPR007696">
    <property type="entry name" value="DNA_mismatch_repair_MutS_core"/>
</dbReference>
<dbReference type="InterPro" id="IPR016151">
    <property type="entry name" value="DNA_mismatch_repair_MutS_N"/>
</dbReference>
<dbReference type="InterPro" id="IPR036187">
    <property type="entry name" value="DNA_mismatch_repair_MutS_sf"/>
</dbReference>
<dbReference type="InterPro" id="IPR007860">
    <property type="entry name" value="DNA_mmatch_repair_MutS_con_dom"/>
</dbReference>
<dbReference type="InterPro" id="IPR045076">
    <property type="entry name" value="MutS"/>
</dbReference>
<dbReference type="InterPro" id="IPR036678">
    <property type="entry name" value="MutS_con_dom_sf"/>
</dbReference>
<dbReference type="InterPro" id="IPR027417">
    <property type="entry name" value="P-loop_NTPase"/>
</dbReference>
<dbReference type="NCBIfam" id="TIGR01070">
    <property type="entry name" value="mutS1"/>
    <property type="match status" value="1"/>
</dbReference>
<dbReference type="NCBIfam" id="NF003810">
    <property type="entry name" value="PRK05399.1"/>
    <property type="match status" value="1"/>
</dbReference>
<dbReference type="PANTHER" id="PTHR11361:SF34">
    <property type="entry name" value="DNA MISMATCH REPAIR PROTEIN MSH1, MITOCHONDRIAL"/>
    <property type="match status" value="1"/>
</dbReference>
<dbReference type="PANTHER" id="PTHR11361">
    <property type="entry name" value="DNA MISMATCH REPAIR PROTEIN MUTS FAMILY MEMBER"/>
    <property type="match status" value="1"/>
</dbReference>
<dbReference type="Pfam" id="PF01624">
    <property type="entry name" value="MutS_I"/>
    <property type="match status" value="1"/>
</dbReference>
<dbReference type="Pfam" id="PF05188">
    <property type="entry name" value="MutS_II"/>
    <property type="match status" value="1"/>
</dbReference>
<dbReference type="Pfam" id="PF05192">
    <property type="entry name" value="MutS_III"/>
    <property type="match status" value="1"/>
</dbReference>
<dbReference type="Pfam" id="PF05190">
    <property type="entry name" value="MutS_IV"/>
    <property type="match status" value="1"/>
</dbReference>
<dbReference type="Pfam" id="PF00488">
    <property type="entry name" value="MutS_V"/>
    <property type="match status" value="1"/>
</dbReference>
<dbReference type="PIRSF" id="PIRSF037677">
    <property type="entry name" value="DNA_mis_repair_Msh6"/>
    <property type="match status" value="1"/>
</dbReference>
<dbReference type="SMART" id="SM00534">
    <property type="entry name" value="MUTSac"/>
    <property type="match status" value="1"/>
</dbReference>
<dbReference type="SMART" id="SM00533">
    <property type="entry name" value="MUTSd"/>
    <property type="match status" value="1"/>
</dbReference>
<dbReference type="SUPFAM" id="SSF55271">
    <property type="entry name" value="DNA repair protein MutS, domain I"/>
    <property type="match status" value="1"/>
</dbReference>
<dbReference type="SUPFAM" id="SSF53150">
    <property type="entry name" value="DNA repair protein MutS, domain II"/>
    <property type="match status" value="1"/>
</dbReference>
<dbReference type="SUPFAM" id="SSF48334">
    <property type="entry name" value="DNA repair protein MutS, domain III"/>
    <property type="match status" value="1"/>
</dbReference>
<dbReference type="SUPFAM" id="SSF52540">
    <property type="entry name" value="P-loop containing nucleoside triphosphate hydrolases"/>
    <property type="match status" value="1"/>
</dbReference>
<dbReference type="PROSITE" id="PS00486">
    <property type="entry name" value="DNA_MISMATCH_REPAIR_2"/>
    <property type="match status" value="1"/>
</dbReference>
<protein>
    <recommendedName>
        <fullName evidence="1">DNA mismatch repair protein MutS</fullName>
    </recommendedName>
</protein>
<name>MUTS_CLOBH</name>